<gene>
    <name type="primary">nqo8</name>
</gene>
<keyword id="KW-0997">Cell inner membrane</keyword>
<keyword id="KW-1003">Cell membrane</keyword>
<keyword id="KW-0472">Membrane</keyword>
<keyword id="KW-0520">NAD</keyword>
<keyword id="KW-0874">Quinone</keyword>
<keyword id="KW-1278">Translocase</keyword>
<keyword id="KW-0812">Transmembrane</keyword>
<keyword id="KW-1133">Transmembrane helix</keyword>
<proteinExistence type="inferred from homology"/>
<organism>
    <name type="scientific">Rhodothermus marinus</name>
    <name type="common">Rhodothermus obamensis</name>
    <dbReference type="NCBI Taxonomy" id="29549"/>
    <lineage>
        <taxon>Bacteria</taxon>
        <taxon>Pseudomonadati</taxon>
        <taxon>Rhodothermota</taxon>
        <taxon>Rhodothermia</taxon>
        <taxon>Rhodothermales</taxon>
        <taxon>Rhodothermaceae</taxon>
        <taxon>Rhodothermus</taxon>
    </lineage>
</organism>
<comment type="function">
    <text evidence="1">NDH-1 shuttles electrons from NADH, via FMN and iron-sulfur (Fe-S) centers, to quinones in the respiratory chain. The immediate electron acceptor for the enzyme in this species is believed to be menaquinone. Couples the redox reaction to proton translocation (for every two electrons transferred, four hydrogen ions are translocated across the cytoplasmic membrane), and thus conserves the redox energy in a proton gradient.</text>
</comment>
<comment type="catalytic activity">
    <reaction>
        <text>a quinone + NADH + 5 H(+)(in) = a quinol + NAD(+) + 4 H(+)(out)</text>
        <dbReference type="Rhea" id="RHEA:57888"/>
        <dbReference type="ChEBI" id="CHEBI:15378"/>
        <dbReference type="ChEBI" id="CHEBI:24646"/>
        <dbReference type="ChEBI" id="CHEBI:57540"/>
        <dbReference type="ChEBI" id="CHEBI:57945"/>
        <dbReference type="ChEBI" id="CHEBI:132124"/>
    </reaction>
</comment>
<comment type="subunit">
    <text evidence="1">NDH-1 is composed of 14 different subunits. Subunits Nqo7-14 constitute the membrane sector of the complex (By similarity).</text>
</comment>
<comment type="subcellular location">
    <subcellularLocation>
        <location evidence="3">Cell inner membrane</location>
        <topology evidence="3">Multi-pass membrane protein</topology>
    </subcellularLocation>
</comment>
<comment type="similarity">
    <text evidence="3">Belongs to the complex I subunit 1 family.</text>
</comment>
<protein>
    <recommendedName>
        <fullName>NADH-quinone oxidoreductase subunit 8</fullName>
        <ecNumber>7.1.1.-</ecNumber>
    </recommendedName>
    <alternativeName>
        <fullName>NADH dehydrogenase I subunit 8</fullName>
    </alternativeName>
    <alternativeName>
        <fullName>NDH-1 subunit 8</fullName>
    </alternativeName>
</protein>
<dbReference type="EC" id="7.1.1.-"/>
<dbReference type="EMBL" id="AY972098">
    <property type="protein sequence ID" value="AAY42992.1"/>
    <property type="molecule type" value="Genomic_DNA"/>
</dbReference>
<dbReference type="SMR" id="Q4QSC6"/>
<dbReference type="GO" id="GO:0005886">
    <property type="term" value="C:plasma membrane"/>
    <property type="evidence" value="ECO:0007669"/>
    <property type="project" value="UniProtKB-SubCell"/>
</dbReference>
<dbReference type="GO" id="GO:0003954">
    <property type="term" value="F:NADH dehydrogenase activity"/>
    <property type="evidence" value="ECO:0007669"/>
    <property type="project" value="TreeGrafter"/>
</dbReference>
<dbReference type="GO" id="GO:0016655">
    <property type="term" value="F:oxidoreductase activity, acting on NAD(P)H, quinone or similar compound as acceptor"/>
    <property type="evidence" value="ECO:0007669"/>
    <property type="project" value="UniProtKB-UniRule"/>
</dbReference>
<dbReference type="GO" id="GO:0048038">
    <property type="term" value="F:quinone binding"/>
    <property type="evidence" value="ECO:0007669"/>
    <property type="project" value="UniProtKB-KW"/>
</dbReference>
<dbReference type="GO" id="GO:0009060">
    <property type="term" value="P:aerobic respiration"/>
    <property type="evidence" value="ECO:0007669"/>
    <property type="project" value="TreeGrafter"/>
</dbReference>
<dbReference type="HAMAP" id="MF_01350">
    <property type="entry name" value="NDH1_NuoH"/>
    <property type="match status" value="1"/>
</dbReference>
<dbReference type="InterPro" id="IPR001694">
    <property type="entry name" value="NADH_UbQ_OxRdtase_su1/FPO"/>
</dbReference>
<dbReference type="InterPro" id="IPR018086">
    <property type="entry name" value="NADH_UbQ_OxRdtase_su1_CS"/>
</dbReference>
<dbReference type="NCBIfam" id="NF004741">
    <property type="entry name" value="PRK06076.1-2"/>
    <property type="match status" value="1"/>
</dbReference>
<dbReference type="PANTHER" id="PTHR11432">
    <property type="entry name" value="NADH DEHYDROGENASE SUBUNIT 1"/>
    <property type="match status" value="1"/>
</dbReference>
<dbReference type="PANTHER" id="PTHR11432:SF3">
    <property type="entry name" value="NADH-UBIQUINONE OXIDOREDUCTASE CHAIN 1"/>
    <property type="match status" value="1"/>
</dbReference>
<dbReference type="Pfam" id="PF00146">
    <property type="entry name" value="NADHdh"/>
    <property type="match status" value="1"/>
</dbReference>
<dbReference type="PROSITE" id="PS00668">
    <property type="entry name" value="COMPLEX1_ND1_2"/>
    <property type="match status" value="1"/>
</dbReference>
<accession>Q4QSC6</accession>
<evidence type="ECO:0000250" key="1"/>
<evidence type="ECO:0000255" key="2"/>
<evidence type="ECO:0000305" key="3"/>
<name>NQO8_RHOMR</name>
<reference key="1">
    <citation type="journal article" date="2005" name="Biochim. Biophys. Acta">
        <title>A nhaD Na+/H+ antiporter and a pcd homologues are among the Rhodothermus marinus complex I genes.</title>
        <authorList>
            <person name="Melo A.M.P."/>
            <person name="Lobo S.A.L."/>
            <person name="Sousa F.L."/>
            <person name="Fernandes A.S."/>
            <person name="Pereira M.M."/>
            <person name="Hreggvidsson G.O."/>
            <person name="Kristjansson J.K."/>
            <person name="Saraiva L.M."/>
            <person name="Teixeira M."/>
        </authorList>
    </citation>
    <scope>NUCLEOTIDE SEQUENCE [GENOMIC DNA]</scope>
    <source>
        <strain>PRQ-62B</strain>
    </source>
</reference>
<sequence length="341" mass="37374">MDLPLYWTALIAFLIINAMLLTASVLVYAERKISGFIQHRLGPNRVGPAGFLQPFADVVKLLFKEDIIPAQANRFIHALAPTIMVTIAMTVPALIPFARGVVIADIDVGVLAILALTSISVYGITLAGWSSNSKYSLLGGLRSSAQMISYELAMGTAVLSVILQAGSLNVSAIVEAQRDGWAILGWHVFTNPIGALIFIVTAFAETNRLPFDLPEAEQELVGGYHTEYSGMKFGMFFLAEYVNLFVASFVIATLFFGGYLVPFEPLLLKAFPALEGSVLLGLLQFLSLLAKTCFFAFLYIWVRWTFPRFKYNQLMTLGWKYLLPIGLANVILIALGVALFS</sequence>
<feature type="chain" id="PRO_0000240051" description="NADH-quinone oxidoreductase subunit 8">
    <location>
        <begin position="1"/>
        <end position="341"/>
    </location>
</feature>
<feature type="transmembrane region" description="Helical" evidence="2">
    <location>
        <begin position="9"/>
        <end position="29"/>
    </location>
</feature>
<feature type="transmembrane region" description="Helical" evidence="2">
    <location>
        <begin position="75"/>
        <end position="95"/>
    </location>
</feature>
<feature type="transmembrane region" description="Helical" evidence="2">
    <location>
        <begin position="108"/>
        <end position="128"/>
    </location>
</feature>
<feature type="transmembrane region" description="Helical" evidence="2">
    <location>
        <begin position="154"/>
        <end position="174"/>
    </location>
</feature>
<feature type="transmembrane region" description="Helical" evidence="2">
    <location>
        <begin position="180"/>
        <end position="200"/>
    </location>
</feature>
<feature type="transmembrane region" description="Helical" evidence="2">
    <location>
        <begin position="244"/>
        <end position="264"/>
    </location>
</feature>
<feature type="transmembrane region" description="Helical" evidence="2">
    <location>
        <begin position="278"/>
        <end position="298"/>
    </location>
</feature>
<feature type="transmembrane region" description="Helical" evidence="2">
    <location>
        <begin position="321"/>
        <end position="341"/>
    </location>
</feature>